<evidence type="ECO:0000250" key="1"/>
<evidence type="ECO:0000255" key="2">
    <source>
        <dbReference type="PROSITE-ProRule" id="PRU00338"/>
    </source>
</evidence>
<evidence type="ECO:0000256" key="3">
    <source>
        <dbReference type="SAM" id="MobiDB-lite"/>
    </source>
</evidence>
<evidence type="ECO:0000269" key="4">
    <source>
    </source>
</evidence>
<evidence type="ECO:0000269" key="5">
    <source>
    </source>
</evidence>
<evidence type="ECO:0000269" key="6">
    <source>
    </source>
</evidence>
<evidence type="ECO:0000269" key="7">
    <source>
    </source>
</evidence>
<evidence type="ECO:0000269" key="8">
    <source>
    </source>
</evidence>
<evidence type="ECO:0000269" key="9">
    <source>
    </source>
</evidence>
<evidence type="ECO:0000269" key="10">
    <source>
    </source>
</evidence>
<evidence type="ECO:0000269" key="11">
    <source>
    </source>
</evidence>
<evidence type="ECO:0000269" key="12">
    <source>
    </source>
</evidence>
<evidence type="ECO:0000303" key="13">
    <source>
    </source>
</evidence>
<evidence type="ECO:0000312" key="14">
    <source>
        <dbReference type="Araport" id="AT5G59380"/>
    </source>
</evidence>
<evidence type="ECO:0000312" key="15">
    <source>
        <dbReference type="EMBL" id="BAA97474.1"/>
    </source>
</evidence>
<evidence type="ECO:0007829" key="16">
    <source>
        <dbReference type="PDB" id="7D8K"/>
    </source>
</evidence>
<evidence type="ECO:0007829" key="17">
    <source>
        <dbReference type="PDB" id="7FEF"/>
    </source>
</evidence>
<accession>Q9LTJ1</accession>
<organism>
    <name type="scientific">Arabidopsis thaliana</name>
    <name type="common">Mouse-ear cress</name>
    <dbReference type="NCBI Taxonomy" id="3702"/>
    <lineage>
        <taxon>Eukaryota</taxon>
        <taxon>Viridiplantae</taxon>
        <taxon>Streptophyta</taxon>
        <taxon>Embryophyta</taxon>
        <taxon>Tracheophyta</taxon>
        <taxon>Spermatophyta</taxon>
        <taxon>Magnoliopsida</taxon>
        <taxon>eudicotyledons</taxon>
        <taxon>Gunneridae</taxon>
        <taxon>Pentapetalae</taxon>
        <taxon>rosids</taxon>
        <taxon>malvids</taxon>
        <taxon>Brassicales</taxon>
        <taxon>Brassicaceae</taxon>
        <taxon>Camelineae</taxon>
        <taxon>Arabidopsis</taxon>
    </lineage>
</organism>
<comment type="function">
    <text evidence="4 6 7 11 12">Transcriptional regulator that binds CpG, CpNpN and CpNpG (N is A, T, or C) islands in promoters regardless the DNA methylation status. Plays probably a role in gene silencing. May associate with histone deacetylase proteins (HDAC). Required for nucleolar dominance that consist in the silencing of rRNA genes inherited from one progenitor in genetic hybrids. Recruited to rRNA genes in a DRM2-dependent manner. Maintains gene silencing by interacting with RNA binding proteins (e.g. NTF2, RPS2C, HDA6 and AGO4) and by regulating DNA methylation status (PubMed:28229965).</text>
</comment>
<comment type="subunit">
    <text evidence="8 10 12">Homodimer and heterodimer with MBD5 (PubMed:18211904). Interacts with DDM1 via its MBD domain (PubMed:15805479). Interacts with NTF2, RPS2C, HDA6 and AGO4 (PubMed:28229965).</text>
</comment>
<comment type="subcellular location">
    <subcellularLocation>
        <location evidence="6 7 8 9 10 11">Nucleus</location>
    </subcellularLocation>
    <subcellularLocation>
        <location evidence="7 8 9 10 11">Chromosome</location>
    </subcellularLocation>
    <subcellularLocation>
        <location evidence="11">Nucleus</location>
        <location evidence="11">Nucleolus</location>
    </subcellularLocation>
    <text evidence="7 8 9 10 11">Associated with heterochromatin, and particularly at perinucleolar chromocenters and nucleolus organizer regions (NORs) in a DRM2-dependent manner.</text>
</comment>
<comment type="tissue specificity">
    <text evidence="5 7">Expressed in rosette leaves, buds, flowers, stems, mature seeds and roots.</text>
</comment>
<comment type="domain">
    <text evidence="1">The methyl-CpG-binding domain (MBD) functions both in binding to methylated DNA and in protein interactions.</text>
</comment>
<comment type="disruption phenotype">
    <text evidence="11 12">Impaired nucleolar dominance (PubMed:19061642). Reduced DNA methylation in some of the targets of RNA-directed DNA methylation (RdDM) and loss of DNA methylation in 180 bp centromeric repeats (PubMed:28229965).</text>
</comment>
<feature type="chain" id="PRO_0000405282" description="Methyl-CpG-binding domain-containing protein 6">
    <location>
        <begin position="1"/>
        <end position="225"/>
    </location>
</feature>
<feature type="domain" description="MBD" evidence="2">
    <location>
        <begin position="71"/>
        <end position="146"/>
    </location>
</feature>
<feature type="region of interest" description="Disordered" evidence="3">
    <location>
        <begin position="25"/>
        <end position="92"/>
    </location>
</feature>
<feature type="turn" evidence="16">
    <location>
        <begin position="78"/>
        <end position="80"/>
    </location>
</feature>
<feature type="strand" evidence="17">
    <location>
        <begin position="86"/>
        <end position="91"/>
    </location>
</feature>
<feature type="turn" evidence="17">
    <location>
        <begin position="96"/>
        <end position="99"/>
    </location>
</feature>
<feature type="strand" evidence="17">
    <location>
        <begin position="101"/>
        <end position="106"/>
    </location>
</feature>
<feature type="turn" evidence="17">
    <location>
        <begin position="108"/>
        <end position="110"/>
    </location>
</feature>
<feature type="strand" evidence="17">
    <location>
        <begin position="113"/>
        <end position="116"/>
    </location>
</feature>
<feature type="helix" evidence="17">
    <location>
        <begin position="117"/>
        <end position="125"/>
    </location>
</feature>
<proteinExistence type="evidence at protein level"/>
<dbReference type="EMBL" id="AB025604">
    <property type="protein sequence ID" value="BAA97474.1"/>
    <property type="molecule type" value="Genomic_DNA"/>
</dbReference>
<dbReference type="EMBL" id="CP002688">
    <property type="protein sequence ID" value="AED97178.1"/>
    <property type="molecule type" value="Genomic_DNA"/>
</dbReference>
<dbReference type="EMBL" id="BT004606">
    <property type="protein sequence ID" value="AAO42852.1"/>
    <property type="molecule type" value="mRNA"/>
</dbReference>
<dbReference type="EMBL" id="AK227565">
    <property type="protein sequence ID" value="BAE99559.1"/>
    <property type="molecule type" value="mRNA"/>
</dbReference>
<dbReference type="RefSeq" id="NP_200746.1">
    <property type="nucleotide sequence ID" value="NM_125329.4"/>
</dbReference>
<dbReference type="PDB" id="7D8K">
    <property type="method" value="NMR"/>
    <property type="chains" value="A=78-140"/>
</dbReference>
<dbReference type="PDB" id="7FEF">
    <property type="method" value="X-ray"/>
    <property type="resolution" value="2.39 A"/>
    <property type="chains" value="A=67-137"/>
</dbReference>
<dbReference type="PDBsum" id="7D8K"/>
<dbReference type="PDBsum" id="7FEF"/>
<dbReference type="SMR" id="Q9LTJ1"/>
<dbReference type="BioGRID" id="21301">
    <property type="interactions" value="21"/>
</dbReference>
<dbReference type="FunCoup" id="Q9LTJ1">
    <property type="interactions" value="436"/>
</dbReference>
<dbReference type="IntAct" id="Q9LTJ1">
    <property type="interactions" value="16"/>
</dbReference>
<dbReference type="STRING" id="3702.Q9LTJ1"/>
<dbReference type="iPTMnet" id="Q9LTJ1"/>
<dbReference type="PaxDb" id="3702-AT5G59380.1"/>
<dbReference type="ProteomicsDB" id="250924"/>
<dbReference type="EnsemblPlants" id="AT5G59380.1">
    <property type="protein sequence ID" value="AT5G59380.1"/>
    <property type="gene ID" value="AT5G59380"/>
</dbReference>
<dbReference type="GeneID" id="836057"/>
<dbReference type="Gramene" id="AT5G59380.1">
    <property type="protein sequence ID" value="AT5G59380.1"/>
    <property type="gene ID" value="AT5G59380"/>
</dbReference>
<dbReference type="KEGG" id="ath:AT5G59380"/>
<dbReference type="Araport" id="AT5G59380"/>
<dbReference type="TAIR" id="AT5G59380">
    <property type="gene designation" value="MBD6"/>
</dbReference>
<dbReference type="eggNOG" id="KOG4161">
    <property type="taxonomic scope" value="Eukaryota"/>
</dbReference>
<dbReference type="HOGENOM" id="CLU_113092_0_0_1"/>
<dbReference type="InParanoid" id="Q9LTJ1"/>
<dbReference type="OMA" id="WSMANAG"/>
<dbReference type="OrthoDB" id="10072024at2759"/>
<dbReference type="PhylomeDB" id="Q9LTJ1"/>
<dbReference type="PRO" id="PR:Q9LTJ1"/>
<dbReference type="Proteomes" id="UP000006548">
    <property type="component" value="Chromosome 5"/>
</dbReference>
<dbReference type="ExpressionAtlas" id="Q9LTJ1">
    <property type="expression patterns" value="baseline and differential"/>
</dbReference>
<dbReference type="GO" id="GO:0000792">
    <property type="term" value="C:heterochromatin"/>
    <property type="evidence" value="ECO:0000314"/>
    <property type="project" value="UniProtKB"/>
</dbReference>
<dbReference type="GO" id="GO:0005731">
    <property type="term" value="C:nucleolus organizer region"/>
    <property type="evidence" value="ECO:0000314"/>
    <property type="project" value="UniProtKB"/>
</dbReference>
<dbReference type="GO" id="GO:0005634">
    <property type="term" value="C:nucleus"/>
    <property type="evidence" value="ECO:0000314"/>
    <property type="project" value="UniProtKB"/>
</dbReference>
<dbReference type="GO" id="GO:0010370">
    <property type="term" value="C:perinucleolar chromocenter"/>
    <property type="evidence" value="ECO:0000314"/>
    <property type="project" value="TAIR"/>
</dbReference>
<dbReference type="GO" id="GO:0009536">
    <property type="term" value="C:plastid"/>
    <property type="evidence" value="ECO:0007005"/>
    <property type="project" value="TAIR"/>
</dbReference>
<dbReference type="GO" id="GO:0019899">
    <property type="term" value="F:enzyme binding"/>
    <property type="evidence" value="ECO:0000353"/>
    <property type="project" value="UniProtKB"/>
</dbReference>
<dbReference type="GO" id="GO:0008327">
    <property type="term" value="F:methyl-CpG binding"/>
    <property type="evidence" value="ECO:0000314"/>
    <property type="project" value="TAIR"/>
</dbReference>
<dbReference type="GO" id="GO:0031047">
    <property type="term" value="P:regulatory ncRNA-mediated gene silencing"/>
    <property type="evidence" value="ECO:0007669"/>
    <property type="project" value="UniProtKB-KW"/>
</dbReference>
<dbReference type="CDD" id="cd01396">
    <property type="entry name" value="MeCP2_MBD"/>
    <property type="match status" value="1"/>
</dbReference>
<dbReference type="Gene3D" id="3.30.890.10">
    <property type="entry name" value="Methyl-cpg-binding Protein 2, Chain A"/>
    <property type="match status" value="1"/>
</dbReference>
<dbReference type="InterPro" id="IPR016177">
    <property type="entry name" value="DNA-bd_dom_sf"/>
</dbReference>
<dbReference type="InterPro" id="IPR001739">
    <property type="entry name" value="Methyl_CpG_DNA-bd"/>
</dbReference>
<dbReference type="PANTHER" id="PTHR12396">
    <property type="entry name" value="METHYL-CPG BINDING PROTEIN, MBD"/>
    <property type="match status" value="1"/>
</dbReference>
<dbReference type="PANTHER" id="PTHR12396:SF46">
    <property type="entry name" value="METHYL-CPG-BINDING DOMAIN-CONTAINING PROTEIN 6"/>
    <property type="match status" value="1"/>
</dbReference>
<dbReference type="Pfam" id="PF01429">
    <property type="entry name" value="MBD"/>
    <property type="match status" value="1"/>
</dbReference>
<dbReference type="SMART" id="SM00391">
    <property type="entry name" value="MBD"/>
    <property type="match status" value="1"/>
</dbReference>
<dbReference type="SUPFAM" id="SSF54171">
    <property type="entry name" value="DNA-binding domain"/>
    <property type="match status" value="1"/>
</dbReference>
<dbReference type="PROSITE" id="PS50982">
    <property type="entry name" value="MBD"/>
    <property type="match status" value="1"/>
</dbReference>
<keyword id="KW-0002">3D-structure</keyword>
<keyword id="KW-0158">Chromosome</keyword>
<keyword id="KW-0238">DNA-binding</keyword>
<keyword id="KW-0539">Nucleus</keyword>
<keyword id="KW-1185">Reference proteome</keyword>
<keyword id="KW-0943">RNA-mediated gene silencing</keyword>
<keyword id="KW-0804">Transcription</keyword>
<keyword id="KW-0805">Transcription regulation</keyword>
<sequence>MSDSVAGDFPPDPLLASGAFISSAGDGTLDSSAKRRPIQGGIGISGSGESVRIGMANGTDQVNHQTESKSRKRAAPGDNWLPPGWRVEDKIRTSGATAGSVDKYYYEPNTGRKFRSRTEVLYYLEHGTSKRGTKKAENTYFNPDHFEGQGSNRVTRTATVPPPPPPPLDFDFKNPPDKVSWSMANAGEEGWIPNIGDVKVQDSVRRDWSTAFTFITSRNPSKVSA</sequence>
<name>MBD6_ARATH</name>
<protein>
    <recommendedName>
        <fullName evidence="13">Methyl-CpG-binding domain-containing protein 6</fullName>
        <shortName evidence="13">AtMBD6</shortName>
        <shortName evidence="13">MBD06</shortName>
    </recommendedName>
    <alternativeName>
        <fullName evidence="13">Methyl-CpG-binding protein MBD6</fullName>
    </alternativeName>
</protein>
<reference key="1">
    <citation type="submission" date="1999-04" db="EMBL/GenBank/DDBJ databases">
        <title>Structural analysis of Arabidopsis thaliana chromosome 5. XI.</title>
        <authorList>
            <person name="Kaneko T."/>
            <person name="Katoh T."/>
            <person name="Asamizu E."/>
            <person name="Sato S."/>
            <person name="Nakamura Y."/>
            <person name="Kotani H."/>
            <person name="Tabata S."/>
        </authorList>
    </citation>
    <scope>NUCLEOTIDE SEQUENCE [LARGE SCALE GENOMIC DNA]</scope>
    <source>
        <strain>cv. Columbia</strain>
    </source>
</reference>
<reference key="2">
    <citation type="journal article" date="2017" name="Plant J.">
        <title>Araport11: a complete reannotation of the Arabidopsis thaliana reference genome.</title>
        <authorList>
            <person name="Cheng C.Y."/>
            <person name="Krishnakumar V."/>
            <person name="Chan A.P."/>
            <person name="Thibaud-Nissen F."/>
            <person name="Schobel S."/>
            <person name="Town C.D."/>
        </authorList>
    </citation>
    <scope>GENOME REANNOTATION</scope>
    <source>
        <strain>cv. Columbia</strain>
    </source>
</reference>
<reference key="3">
    <citation type="journal article" date="2003" name="Science">
        <title>Empirical analysis of transcriptional activity in the Arabidopsis genome.</title>
        <authorList>
            <person name="Yamada K."/>
            <person name="Lim J."/>
            <person name="Dale J.M."/>
            <person name="Chen H."/>
            <person name="Shinn P."/>
            <person name="Palm C.J."/>
            <person name="Southwick A.M."/>
            <person name="Wu H.C."/>
            <person name="Kim C.J."/>
            <person name="Nguyen M."/>
            <person name="Pham P.K."/>
            <person name="Cheuk R.F."/>
            <person name="Karlin-Newmann G."/>
            <person name="Liu S.X."/>
            <person name="Lam B."/>
            <person name="Sakano H."/>
            <person name="Wu T."/>
            <person name="Yu G."/>
            <person name="Miranda M."/>
            <person name="Quach H.L."/>
            <person name="Tripp M."/>
            <person name="Chang C.H."/>
            <person name="Lee J.M."/>
            <person name="Toriumi M.J."/>
            <person name="Chan M.M."/>
            <person name="Tang C.C."/>
            <person name="Onodera C.S."/>
            <person name="Deng J.M."/>
            <person name="Akiyama K."/>
            <person name="Ansari Y."/>
            <person name="Arakawa T."/>
            <person name="Banh J."/>
            <person name="Banno F."/>
            <person name="Bowser L."/>
            <person name="Brooks S.Y."/>
            <person name="Carninci P."/>
            <person name="Chao Q."/>
            <person name="Choy N."/>
            <person name="Enju A."/>
            <person name="Goldsmith A.D."/>
            <person name="Gurjal M."/>
            <person name="Hansen N.F."/>
            <person name="Hayashizaki Y."/>
            <person name="Johnson-Hopson C."/>
            <person name="Hsuan V.W."/>
            <person name="Iida K."/>
            <person name="Karnes M."/>
            <person name="Khan S."/>
            <person name="Koesema E."/>
            <person name="Ishida J."/>
            <person name="Jiang P.X."/>
            <person name="Jones T."/>
            <person name="Kawai J."/>
            <person name="Kamiya A."/>
            <person name="Meyers C."/>
            <person name="Nakajima M."/>
            <person name="Narusaka M."/>
            <person name="Seki M."/>
            <person name="Sakurai T."/>
            <person name="Satou M."/>
            <person name="Tamse R."/>
            <person name="Vaysberg M."/>
            <person name="Wallender E.K."/>
            <person name="Wong C."/>
            <person name="Yamamura Y."/>
            <person name="Yuan S."/>
            <person name="Shinozaki K."/>
            <person name="Davis R.W."/>
            <person name="Theologis A."/>
            <person name="Ecker J.R."/>
        </authorList>
    </citation>
    <scope>NUCLEOTIDE SEQUENCE [LARGE SCALE MRNA]</scope>
    <source>
        <strain>cv. Columbia</strain>
    </source>
</reference>
<reference key="4">
    <citation type="submission" date="2006-07" db="EMBL/GenBank/DDBJ databases">
        <title>Large-scale analysis of RIKEN Arabidopsis full-length (RAFL) cDNAs.</title>
        <authorList>
            <person name="Totoki Y."/>
            <person name="Seki M."/>
            <person name="Ishida J."/>
            <person name="Nakajima M."/>
            <person name="Enju A."/>
            <person name="Kamiya A."/>
            <person name="Narusaka M."/>
            <person name="Shin-i T."/>
            <person name="Nakagawa M."/>
            <person name="Sakamoto N."/>
            <person name="Oishi K."/>
            <person name="Kohara Y."/>
            <person name="Kobayashi M."/>
            <person name="Toyoda A."/>
            <person name="Sakaki Y."/>
            <person name="Sakurai T."/>
            <person name="Iida K."/>
            <person name="Akiyama K."/>
            <person name="Satou M."/>
            <person name="Toyoda T."/>
            <person name="Konagaya A."/>
            <person name="Carninci P."/>
            <person name="Kawai J."/>
            <person name="Hayashizaki Y."/>
            <person name="Shinozaki K."/>
        </authorList>
    </citation>
    <scope>NUCLEOTIDE SEQUENCE [LARGE SCALE MRNA]</scope>
    <source>
        <strain>cv. Columbia</strain>
    </source>
</reference>
<reference key="5">
    <citation type="journal article" date="2003" name="Nucleic Acids Res.">
        <title>Ten members of the Arabidopsis gene family encoding methyl-CpG-binding domain proteins are transcriptionally active and at least one, AtMBD11, is crucial for normal development.</title>
        <authorList>
            <person name="Berg A."/>
            <person name="Meza T.J."/>
            <person name="Mahic M."/>
            <person name="Thorstensen T."/>
            <person name="Kristiansen K."/>
            <person name="Aalen R.B."/>
        </authorList>
    </citation>
    <scope>TISSUE SPECIFICITY</scope>
    <scope>GENE FAMILY</scope>
    <scope>NOMENCLATURE</scope>
</reference>
<reference key="6">
    <citation type="journal article" date="2003" name="Plant J.">
        <title>Characterization of Arabidopsis thaliana methyl-CpG-binding domain (MBD) proteins.</title>
        <authorList>
            <person name="Zemach A."/>
            <person name="Grafi G."/>
        </authorList>
    </citation>
    <scope>FUNCTION</scope>
</reference>
<reference key="7">
    <citation type="journal article" date="2003" name="Plant Mol. Biol.">
        <title>Arabidopsis MBD proteins show different binding specificities and nuclear localization.</title>
        <authorList>
            <person name="Scebba F."/>
            <person name="Bernacchia G."/>
            <person name="De Bastiani M."/>
            <person name="Evangelista M."/>
            <person name="Cantoni R.M."/>
            <person name="Cella R."/>
            <person name="Locci M.T."/>
            <person name="Pitto L."/>
        </authorList>
    </citation>
    <scope>FUNCTION</scope>
    <scope>SUBCELLULAR LOCATION</scope>
    <scope>TISSUE SPECIFICITY</scope>
    <source>
        <strain>cv. Columbia</strain>
    </source>
</reference>
<reference key="8">
    <citation type="journal article" date="2003" name="Plant Physiol.">
        <title>Methylated DNA-binding proteins from Arabidopsis.</title>
        <authorList>
            <person name="Ito M."/>
            <person name="Koike A."/>
            <person name="Koizumi N."/>
            <person name="Sano H."/>
        </authorList>
    </citation>
    <scope>FUNCTION</scope>
    <scope>SUBCELLULAR LOCATION</scope>
</reference>
<reference key="9">
    <citation type="journal article" date="2005" name="Plant Cell">
        <title>DDM1 binds Arabidopsis methyl-CpG binding domain proteins and affects their subnuclear localization.</title>
        <authorList>
            <person name="Zemach A."/>
            <person name="Li Y."/>
            <person name="Wayburn B."/>
            <person name="Ben-Meir H."/>
            <person name="Kiss V."/>
            <person name="Avivi Y."/>
            <person name="Kalchenko V."/>
            <person name="Jacobsen S.E."/>
            <person name="Grafi G."/>
        </authorList>
    </citation>
    <scope>SUBCELLULAR LOCATION</scope>
    <scope>INTERACTION WITH DDM1</scope>
</reference>
<reference key="10">
    <citation type="journal article" date="2005" name="Plant Physiol.">
        <title>Evolutionary divergence of monocot and dicot methyl-CpG-binding domain proteins.</title>
        <authorList>
            <person name="Springer N.M."/>
            <person name="Kaeppler S.M."/>
        </authorList>
    </citation>
    <scope>GENE FAMILY</scope>
</reference>
<reference key="11">
    <citation type="journal article" date="2007" name="Trends Plant Sci.">
        <title>Methyl-CpG-binding domain proteins in plants: interpreters of DNA methylation.</title>
        <authorList>
            <person name="Zemach A."/>
            <person name="Grafi G."/>
        </authorList>
    </citation>
    <scope>SUBCELLULAR LOCATION</scope>
    <scope>REVIEW</scope>
</reference>
<reference key="12">
    <citation type="journal article" date="2008" name="J. Biol. Chem.">
        <title>The three methyl-CpG-binding domains of AtMBD7 control its subnuclear localization and mobility.</title>
        <authorList>
            <person name="Zemach A."/>
            <person name="Gaspan O."/>
            <person name="Grafi G."/>
        </authorList>
    </citation>
    <scope>SUBCELLULAR LOCATION</scope>
    <scope>DIMERIZATION</scope>
    <scope>INTERACTION WITH MBD5</scope>
</reference>
<reference key="13">
    <citation type="journal article" date="2008" name="Mol. Cell">
        <title>Multimegabase silencing in nucleolar dominance involves siRNA-directed DNA methylation and specific methylcytosine-binding proteins.</title>
        <authorList>
            <person name="Preuss S.B."/>
            <person name="Costa-Nunes P."/>
            <person name="Tucker S."/>
            <person name="Pontes O."/>
            <person name="Lawrence R.J."/>
            <person name="Mosher R."/>
            <person name="Kasschau K.D."/>
            <person name="Carrington J.C."/>
            <person name="Baulcombe D.C."/>
            <person name="Viegas W."/>
            <person name="Pikaard C.S."/>
        </authorList>
    </citation>
    <scope>FUNCTION</scope>
    <scope>DISRUPTION PHENOTYPE</scope>
    <scope>SUBCELLULAR LOCATION</scope>
</reference>
<reference key="14">
    <citation type="journal article" date="2017" name="J. Biosci.">
        <title>AtMBD6, a methyl CpG binding domain protein, maintains gene silencing in Arabidopsis by interacting with RNA binding proteins.</title>
        <authorList>
            <person name="Parida A.P."/>
            <person name="Sharma A."/>
            <person name="Sharma A.K."/>
        </authorList>
    </citation>
    <scope>FUNCTION</scope>
    <scope>DISRUPTION PHENOTYPE</scope>
    <scope>INTERACTION WITH NTF2; RPS2C; HDA6 AND AGO4</scope>
</reference>
<gene>
    <name evidence="13" type="primary">MBD6</name>
    <name evidence="14" type="ordered locus">At5g59380</name>
    <name evidence="15" type="ORF">F2O15.4</name>
</gene>